<proteinExistence type="inferred from homology"/>
<evidence type="ECO:0000255" key="1">
    <source>
        <dbReference type="HAMAP-Rule" id="MF_01368"/>
    </source>
</evidence>
<evidence type="ECO:0000256" key="2">
    <source>
        <dbReference type="SAM" id="MobiDB-lite"/>
    </source>
</evidence>
<evidence type="ECO:0000305" key="3"/>
<gene>
    <name evidence="1" type="primary">rplQ</name>
    <name type="ordered locus">Cvib_0274</name>
</gene>
<organism>
    <name type="scientific">Chlorobium phaeovibrioides (strain DSM 265 / 1930)</name>
    <name type="common">Prosthecochloris vibrioformis (strain DSM 265)</name>
    <dbReference type="NCBI Taxonomy" id="290318"/>
    <lineage>
        <taxon>Bacteria</taxon>
        <taxon>Pseudomonadati</taxon>
        <taxon>Chlorobiota</taxon>
        <taxon>Chlorobiia</taxon>
        <taxon>Chlorobiales</taxon>
        <taxon>Chlorobiaceae</taxon>
        <taxon>Chlorobium/Pelodictyon group</taxon>
        <taxon>Chlorobium</taxon>
    </lineage>
</organism>
<keyword id="KW-0687">Ribonucleoprotein</keyword>
<keyword id="KW-0689">Ribosomal protein</keyword>
<accession>A4SCT7</accession>
<sequence>MRKVKPARKLGRTAAHRKATLSSLSTQLILHKRIETTEAKAKETRKVVEKIITKARKGTVHAQREIFKDIRDKEAIKTLFEEIVGKVGTRNGGYTRVIKLCPRFGDAAKMAVIELVDFAEAPAAAPKAARQDRSKRVKGSRKTEASAAKAAPAAQAAPELPAESDAPAAEAAPTEE</sequence>
<comment type="subunit">
    <text evidence="1">Part of the 50S ribosomal subunit. Contacts protein L32.</text>
</comment>
<comment type="similarity">
    <text evidence="1">Belongs to the bacterial ribosomal protein bL17 family.</text>
</comment>
<name>RL17_CHLPM</name>
<feature type="chain" id="PRO_1000087186" description="Large ribosomal subunit protein bL17">
    <location>
        <begin position="1"/>
        <end position="176"/>
    </location>
</feature>
<feature type="region of interest" description="Disordered" evidence="2">
    <location>
        <begin position="124"/>
        <end position="176"/>
    </location>
</feature>
<feature type="compositionally biased region" description="Low complexity" evidence="2">
    <location>
        <begin position="145"/>
        <end position="176"/>
    </location>
</feature>
<protein>
    <recommendedName>
        <fullName evidence="1">Large ribosomal subunit protein bL17</fullName>
    </recommendedName>
    <alternativeName>
        <fullName evidence="3">50S ribosomal protein L17</fullName>
    </alternativeName>
</protein>
<reference key="1">
    <citation type="submission" date="2007-03" db="EMBL/GenBank/DDBJ databases">
        <title>Complete sequence of Prosthecochloris vibrioformis DSM 265.</title>
        <authorList>
            <consortium name="US DOE Joint Genome Institute"/>
            <person name="Copeland A."/>
            <person name="Lucas S."/>
            <person name="Lapidus A."/>
            <person name="Barry K."/>
            <person name="Detter J.C."/>
            <person name="Glavina del Rio T."/>
            <person name="Hammon N."/>
            <person name="Israni S."/>
            <person name="Pitluck S."/>
            <person name="Schmutz J."/>
            <person name="Larimer F."/>
            <person name="Land M."/>
            <person name="Hauser L."/>
            <person name="Mikhailova N."/>
            <person name="Li T."/>
            <person name="Overmann J."/>
            <person name="Schuster S.C."/>
            <person name="Bryant D.A."/>
            <person name="Richardson P."/>
        </authorList>
    </citation>
    <scope>NUCLEOTIDE SEQUENCE [LARGE SCALE GENOMIC DNA]</scope>
    <source>
        <strain>DSM 265 / 1930</strain>
    </source>
</reference>
<dbReference type="EMBL" id="CP000607">
    <property type="protein sequence ID" value="ABP36296.1"/>
    <property type="molecule type" value="Genomic_DNA"/>
</dbReference>
<dbReference type="SMR" id="A4SCT7"/>
<dbReference type="STRING" id="290318.Cvib_0274"/>
<dbReference type="KEGG" id="pvi:Cvib_0274"/>
<dbReference type="eggNOG" id="COG0203">
    <property type="taxonomic scope" value="Bacteria"/>
</dbReference>
<dbReference type="HOGENOM" id="CLU_074407_0_1_10"/>
<dbReference type="OrthoDB" id="9809073at2"/>
<dbReference type="GO" id="GO:0022625">
    <property type="term" value="C:cytosolic large ribosomal subunit"/>
    <property type="evidence" value="ECO:0007669"/>
    <property type="project" value="TreeGrafter"/>
</dbReference>
<dbReference type="GO" id="GO:0003735">
    <property type="term" value="F:structural constituent of ribosome"/>
    <property type="evidence" value="ECO:0007669"/>
    <property type="project" value="InterPro"/>
</dbReference>
<dbReference type="GO" id="GO:0006412">
    <property type="term" value="P:translation"/>
    <property type="evidence" value="ECO:0007669"/>
    <property type="project" value="UniProtKB-UniRule"/>
</dbReference>
<dbReference type="Gene3D" id="3.90.1030.10">
    <property type="entry name" value="Ribosomal protein L17"/>
    <property type="match status" value="1"/>
</dbReference>
<dbReference type="HAMAP" id="MF_01368">
    <property type="entry name" value="Ribosomal_bL17"/>
    <property type="match status" value="1"/>
</dbReference>
<dbReference type="InterPro" id="IPR000456">
    <property type="entry name" value="Ribosomal_bL17"/>
</dbReference>
<dbReference type="InterPro" id="IPR047859">
    <property type="entry name" value="Ribosomal_bL17_CS"/>
</dbReference>
<dbReference type="InterPro" id="IPR036373">
    <property type="entry name" value="Ribosomal_bL17_sf"/>
</dbReference>
<dbReference type="NCBIfam" id="TIGR00059">
    <property type="entry name" value="L17"/>
    <property type="match status" value="1"/>
</dbReference>
<dbReference type="PANTHER" id="PTHR14413:SF16">
    <property type="entry name" value="LARGE RIBOSOMAL SUBUNIT PROTEIN BL17M"/>
    <property type="match status" value="1"/>
</dbReference>
<dbReference type="PANTHER" id="PTHR14413">
    <property type="entry name" value="RIBOSOMAL PROTEIN L17"/>
    <property type="match status" value="1"/>
</dbReference>
<dbReference type="Pfam" id="PF01196">
    <property type="entry name" value="Ribosomal_L17"/>
    <property type="match status" value="1"/>
</dbReference>
<dbReference type="SUPFAM" id="SSF64263">
    <property type="entry name" value="Prokaryotic ribosomal protein L17"/>
    <property type="match status" value="1"/>
</dbReference>
<dbReference type="PROSITE" id="PS01167">
    <property type="entry name" value="RIBOSOMAL_L17"/>
    <property type="match status" value="1"/>
</dbReference>